<dbReference type="EC" id="2.1.1.220" evidence="2"/>
<dbReference type="EMBL" id="AAFI02000006">
    <property type="protein sequence ID" value="EAL71620.1"/>
    <property type="molecule type" value="Genomic_DNA"/>
</dbReference>
<dbReference type="SMR" id="Q86JJ0"/>
<dbReference type="FunCoup" id="Q86JJ0">
    <property type="interactions" value="326"/>
</dbReference>
<dbReference type="STRING" id="44689.Q86JJ0"/>
<dbReference type="PaxDb" id="44689-DDB0238375"/>
<dbReference type="EnsemblProtists" id="EAL71620">
    <property type="protein sequence ID" value="EAL71620"/>
    <property type="gene ID" value="DDB_G0271512"/>
</dbReference>
<dbReference type="KEGG" id="ddi:DDB_G0271512"/>
<dbReference type="dictyBase" id="DDB_G0271512">
    <property type="gene designation" value="trmt61"/>
</dbReference>
<dbReference type="VEuPathDB" id="AmoebaDB:DDB_G0271512"/>
<dbReference type="eggNOG" id="KOG2915">
    <property type="taxonomic scope" value="Eukaryota"/>
</dbReference>
<dbReference type="HOGENOM" id="CLU_025402_4_1_1"/>
<dbReference type="InParanoid" id="Q86JJ0"/>
<dbReference type="OMA" id="RPDHRMI"/>
<dbReference type="PhylomeDB" id="Q86JJ0"/>
<dbReference type="PRO" id="PR:Q86JJ0"/>
<dbReference type="Proteomes" id="UP000002195">
    <property type="component" value="Chromosome 2"/>
</dbReference>
<dbReference type="GO" id="GO:0005634">
    <property type="term" value="C:nucleus"/>
    <property type="evidence" value="ECO:0000250"/>
    <property type="project" value="dictyBase"/>
</dbReference>
<dbReference type="GO" id="GO:0031515">
    <property type="term" value="C:tRNA (m1A) methyltransferase complex"/>
    <property type="evidence" value="ECO:0000250"/>
    <property type="project" value="dictyBase"/>
</dbReference>
<dbReference type="GO" id="GO:0140098">
    <property type="term" value="F:catalytic activity, acting on RNA"/>
    <property type="evidence" value="ECO:0000250"/>
    <property type="project" value="dictyBase"/>
</dbReference>
<dbReference type="GO" id="GO:0160107">
    <property type="term" value="F:tRNA (adenine(58)-N1)-methyltransferase activity"/>
    <property type="evidence" value="ECO:0007669"/>
    <property type="project" value="UniProtKB-EC"/>
</dbReference>
<dbReference type="GO" id="GO:0030488">
    <property type="term" value="P:tRNA methylation"/>
    <property type="evidence" value="ECO:0000318"/>
    <property type="project" value="GO_Central"/>
</dbReference>
<dbReference type="Gene3D" id="3.10.330.20">
    <property type="match status" value="1"/>
</dbReference>
<dbReference type="Gene3D" id="3.40.50.150">
    <property type="entry name" value="Vaccinia Virus protein VP39"/>
    <property type="match status" value="1"/>
</dbReference>
<dbReference type="InterPro" id="IPR029063">
    <property type="entry name" value="SAM-dependent_MTases_sf"/>
</dbReference>
<dbReference type="InterPro" id="IPR049470">
    <property type="entry name" value="TRM61_C"/>
</dbReference>
<dbReference type="InterPro" id="IPR014816">
    <property type="entry name" value="tRNA_MeTrfase_Gcd14"/>
</dbReference>
<dbReference type="PANTHER" id="PTHR12133">
    <property type="entry name" value="TRNA (ADENINE(58)-N(1))-METHYLTRANSFERASE"/>
    <property type="match status" value="1"/>
</dbReference>
<dbReference type="PANTHER" id="PTHR12133:SF2">
    <property type="entry name" value="TRNA (ADENINE(58)-N(1))-METHYLTRANSFERASE CATALYTIC SUBUNIT TRMT61A"/>
    <property type="match status" value="1"/>
</dbReference>
<dbReference type="Pfam" id="PF08704">
    <property type="entry name" value="GCD14"/>
    <property type="match status" value="1"/>
</dbReference>
<dbReference type="PIRSF" id="PIRSF017269">
    <property type="entry name" value="GCD14"/>
    <property type="match status" value="1"/>
</dbReference>
<dbReference type="SUPFAM" id="SSF53335">
    <property type="entry name" value="S-adenosyl-L-methionine-dependent methyltransferases"/>
    <property type="match status" value="1"/>
</dbReference>
<dbReference type="PROSITE" id="PS51620">
    <property type="entry name" value="SAM_TRM61"/>
    <property type="match status" value="1"/>
</dbReference>
<proteinExistence type="evidence at protein level"/>
<organism>
    <name type="scientific">Dictyostelium discoideum</name>
    <name type="common">Social amoeba</name>
    <dbReference type="NCBI Taxonomy" id="44689"/>
    <lineage>
        <taxon>Eukaryota</taxon>
        <taxon>Amoebozoa</taxon>
        <taxon>Evosea</taxon>
        <taxon>Eumycetozoa</taxon>
        <taxon>Dictyostelia</taxon>
        <taxon>Dictyosteliales</taxon>
        <taxon>Dictyosteliaceae</taxon>
        <taxon>Dictyostelium</taxon>
    </lineage>
</organism>
<feature type="chain" id="PRO_0000328541" description="tRNA (adenine(58)-N(1))-methyltransferase catalytic subunit trmt61a">
    <location>
        <begin position="1"/>
        <end position="312"/>
    </location>
</feature>
<feature type="binding site" evidence="2">
    <location>
        <position position="85"/>
    </location>
    <ligand>
        <name>S-adenosyl-L-methionine</name>
        <dbReference type="ChEBI" id="CHEBI:59789"/>
    </ligand>
</feature>
<feature type="binding site" evidence="2">
    <location>
        <begin position="112"/>
        <end position="114"/>
    </location>
    <ligand>
        <name>S-adenosyl-L-methionine</name>
        <dbReference type="ChEBI" id="CHEBI:59789"/>
    </ligand>
</feature>
<feature type="binding site" evidence="2 3">
    <location>
        <position position="133"/>
    </location>
    <ligand>
        <name>S-adenosyl-L-methionine</name>
        <dbReference type="ChEBI" id="CHEBI:59789"/>
    </ligand>
</feature>
<feature type="binding site" evidence="2">
    <location>
        <position position="138"/>
    </location>
    <ligand>
        <name>S-adenosyl-L-methionine</name>
        <dbReference type="ChEBI" id="CHEBI:59789"/>
    </ligand>
</feature>
<feature type="binding site" evidence="2">
    <location>
        <begin position="161"/>
        <end position="162"/>
    </location>
    <ligand>
        <name>S-adenosyl-L-methionine</name>
        <dbReference type="ChEBI" id="CHEBI:59789"/>
    </ligand>
</feature>
<feature type="binding site" evidence="2 3">
    <location>
        <position position="183"/>
    </location>
    <ligand>
        <name>S-adenosyl-L-methionine</name>
        <dbReference type="ChEBI" id="CHEBI:59789"/>
    </ligand>
</feature>
<comment type="function">
    <text evidence="4">Catalytic subunit of tRNA (adenine-N(1)-)-methyltransferase, which catalyzes the formation of N(1)-methyladenine at position 58 (m1A58) in initiator methionyl-tRNA.</text>
</comment>
<comment type="catalytic activity">
    <reaction evidence="2 3">
        <text>adenosine(58) in tRNA + S-adenosyl-L-methionine = N(1)-methyladenosine(58) in tRNA + S-adenosyl-L-homocysteine + H(+)</text>
        <dbReference type="Rhea" id="RHEA:43152"/>
        <dbReference type="Rhea" id="RHEA-COMP:10365"/>
        <dbReference type="Rhea" id="RHEA-COMP:10366"/>
        <dbReference type="ChEBI" id="CHEBI:15378"/>
        <dbReference type="ChEBI" id="CHEBI:57856"/>
        <dbReference type="ChEBI" id="CHEBI:59789"/>
        <dbReference type="ChEBI" id="CHEBI:74411"/>
        <dbReference type="ChEBI" id="CHEBI:74491"/>
        <dbReference type="EC" id="2.1.1.220"/>
    </reaction>
</comment>
<comment type="activity regulation">
    <text evidence="4">Inhibited by calcium and magnesium ions and spermidine. Enhanced by KCl, NaCl and NH(4)Cl in concentrations from 0.1-0.25 M. Concentrations of more than 0.3 M are inhibitory.</text>
</comment>
<comment type="biophysicochemical properties">
    <kinetics>
        <KM evidence="4">0.27 uM for S-adenosylmethionine</KM>
    </kinetics>
    <phDependence>
        <text evidence="4">Optimum pH is 7.3.</text>
    </phDependence>
</comment>
<comment type="subunit">
    <text evidence="2">Heterotetramer; composed of two copies of trmt6 and two copies of trmt61a.</text>
</comment>
<comment type="subcellular location">
    <subcellularLocation>
        <location evidence="1">Nucleus</location>
    </subcellularLocation>
</comment>
<comment type="similarity">
    <text evidence="3">Belongs to the class I-like SAM-binding methyltransferase superfamily. TRM61 family.</text>
</comment>
<evidence type="ECO:0000250" key="1">
    <source>
        <dbReference type="UniProtKB" id="P46959"/>
    </source>
</evidence>
<evidence type="ECO:0000250" key="2">
    <source>
        <dbReference type="UniProtKB" id="Q96FX7"/>
    </source>
</evidence>
<evidence type="ECO:0000255" key="3">
    <source>
        <dbReference type="PROSITE-ProRule" id="PRU00952"/>
    </source>
</evidence>
<evidence type="ECO:0000269" key="4">
    <source>
    </source>
</evidence>
<keyword id="KW-0489">Methyltransferase</keyword>
<keyword id="KW-0539">Nucleus</keyword>
<keyword id="KW-1185">Reference proteome</keyword>
<keyword id="KW-0949">S-adenosyl-L-methionine</keyword>
<keyword id="KW-0808">Transferase</keyword>
<keyword id="KW-0819">tRNA processing</keyword>
<sequence length="312" mass="35264">MLNPNKIIKEGDRVVMYNGKDNMAVLTMESNNVYNSKFGSYRHKNIIGKEYGSKLSSDNGNGFCHVIAMTPELWSITLDHRTQILFNLDISTIIFNLELKNGSRAVESGTGSGSLSSSIARTIAPKGHLFTFEFHEERVKFARKDFKDNGLDQYITVTHRDACGKEGFLRQDINNDIDAVFLDLPSPWDAIENAIAVMHDGSMLCSFSPCIEQVQNTCLKLADSKFQEIKTIEVLIRTFDTRLQEYEELNLTNPYIDNNNNNNNNNNIEENRGKFEIGGIEGLKKDKLLSKPFTEARGHTGYLTFARYLPNA</sequence>
<name>TRM61_DICDI</name>
<gene>
    <name type="primary">trmt61a</name>
    <name type="synonym">trm61</name>
    <name type="ORF">DDB_G0271512</name>
</gene>
<accession>Q86JJ0</accession>
<accession>Q55AZ7</accession>
<protein>
    <recommendedName>
        <fullName>tRNA (adenine(58)-N(1))-methyltransferase catalytic subunit trmt61a</fullName>
        <ecNumber evidence="2">2.1.1.220</ecNumber>
    </recommendedName>
    <alternativeName>
        <fullName>tRNA(m1A58)-methyltransferase subunit trmt61A</fullName>
        <shortName>tRNA(m1A58)MTase subunit trmt61A</shortName>
    </alternativeName>
</protein>
<reference key="1">
    <citation type="journal article" date="2002" name="Nature">
        <title>Sequence and analysis of chromosome 2 of Dictyostelium discoideum.</title>
        <authorList>
            <person name="Gloeckner G."/>
            <person name="Eichinger L."/>
            <person name="Szafranski K."/>
            <person name="Pachebat J.A."/>
            <person name="Bankier A.T."/>
            <person name="Dear P.H."/>
            <person name="Lehmann R."/>
            <person name="Baumgart C."/>
            <person name="Parra G."/>
            <person name="Abril J.F."/>
            <person name="Guigo R."/>
            <person name="Kumpf K."/>
            <person name="Tunggal B."/>
            <person name="Cox E.C."/>
            <person name="Quail M.A."/>
            <person name="Platzer M."/>
            <person name="Rosenthal A."/>
            <person name="Noegel A.A."/>
        </authorList>
    </citation>
    <scope>NUCLEOTIDE SEQUENCE [LARGE SCALE GENOMIC DNA]</scope>
    <source>
        <strain>AX4</strain>
    </source>
</reference>
<reference key="2">
    <citation type="journal article" date="2005" name="Nature">
        <title>The genome of the social amoeba Dictyostelium discoideum.</title>
        <authorList>
            <person name="Eichinger L."/>
            <person name="Pachebat J.A."/>
            <person name="Gloeckner G."/>
            <person name="Rajandream M.A."/>
            <person name="Sucgang R."/>
            <person name="Berriman M."/>
            <person name="Song J."/>
            <person name="Olsen R."/>
            <person name="Szafranski K."/>
            <person name="Xu Q."/>
            <person name="Tunggal B."/>
            <person name="Kummerfeld S."/>
            <person name="Madera M."/>
            <person name="Konfortov B.A."/>
            <person name="Rivero F."/>
            <person name="Bankier A.T."/>
            <person name="Lehmann R."/>
            <person name="Hamlin N."/>
            <person name="Davies R."/>
            <person name="Gaudet P."/>
            <person name="Fey P."/>
            <person name="Pilcher K."/>
            <person name="Chen G."/>
            <person name="Saunders D."/>
            <person name="Sodergren E.J."/>
            <person name="Davis P."/>
            <person name="Kerhornou A."/>
            <person name="Nie X."/>
            <person name="Hall N."/>
            <person name="Anjard C."/>
            <person name="Hemphill L."/>
            <person name="Bason N."/>
            <person name="Farbrother P."/>
            <person name="Desany B."/>
            <person name="Just E."/>
            <person name="Morio T."/>
            <person name="Rost R."/>
            <person name="Churcher C.M."/>
            <person name="Cooper J."/>
            <person name="Haydock S."/>
            <person name="van Driessche N."/>
            <person name="Cronin A."/>
            <person name="Goodhead I."/>
            <person name="Muzny D.M."/>
            <person name="Mourier T."/>
            <person name="Pain A."/>
            <person name="Lu M."/>
            <person name="Harper D."/>
            <person name="Lindsay R."/>
            <person name="Hauser H."/>
            <person name="James K.D."/>
            <person name="Quiles M."/>
            <person name="Madan Babu M."/>
            <person name="Saito T."/>
            <person name="Buchrieser C."/>
            <person name="Wardroper A."/>
            <person name="Felder M."/>
            <person name="Thangavelu M."/>
            <person name="Johnson D."/>
            <person name="Knights A."/>
            <person name="Loulseged H."/>
            <person name="Mungall K.L."/>
            <person name="Oliver K."/>
            <person name="Price C."/>
            <person name="Quail M.A."/>
            <person name="Urushihara H."/>
            <person name="Hernandez J."/>
            <person name="Rabbinowitsch E."/>
            <person name="Steffen D."/>
            <person name="Sanders M."/>
            <person name="Ma J."/>
            <person name="Kohara Y."/>
            <person name="Sharp S."/>
            <person name="Simmonds M.N."/>
            <person name="Spiegler S."/>
            <person name="Tivey A."/>
            <person name="Sugano S."/>
            <person name="White B."/>
            <person name="Walker D."/>
            <person name="Woodward J.R."/>
            <person name="Winckler T."/>
            <person name="Tanaka Y."/>
            <person name="Shaulsky G."/>
            <person name="Schleicher M."/>
            <person name="Weinstock G.M."/>
            <person name="Rosenthal A."/>
            <person name="Cox E.C."/>
            <person name="Chisholm R.L."/>
            <person name="Gibbs R.A."/>
            <person name="Loomis W.F."/>
            <person name="Platzer M."/>
            <person name="Kay R.R."/>
            <person name="Williams J.G."/>
            <person name="Dear P.H."/>
            <person name="Noegel A.A."/>
            <person name="Barrell B.G."/>
            <person name="Kuspa A."/>
        </authorList>
    </citation>
    <scope>NUCLEOTIDE SEQUENCE [LARGE SCALE GENOMIC DNA]</scope>
    <source>
        <strain>AX4</strain>
    </source>
</reference>
<reference key="3">
    <citation type="journal article" date="1986" name="Eur. J. Biochem.">
        <title>tRNA (adenine-N1)-methyltransferase from Dictyostelium discoideum. Purification, characterization and developmental changes in activity.</title>
        <authorList>
            <person name="Mutzel R."/>
            <person name="Malchow D."/>
            <person name="Meyer D."/>
            <person name="Kersten H."/>
        </authorList>
    </citation>
    <scope>FUNCTION</scope>
    <scope>ACTIVITY REGULATION</scope>
    <scope>BIOPHYSICOCHEMICAL PROPERTIES</scope>
</reference>